<evidence type="ECO:0000250" key="1"/>
<evidence type="ECO:0000255" key="2"/>
<evidence type="ECO:0000255" key="3">
    <source>
        <dbReference type="PROSITE-ProRule" id="PRU00047"/>
    </source>
</evidence>
<evidence type="ECO:0000256" key="4">
    <source>
        <dbReference type="SAM" id="MobiDB-lite"/>
    </source>
</evidence>
<evidence type="ECO:0000305" key="5"/>
<dbReference type="EMBL" id="L41838">
    <property type="protein sequence ID" value="AAA99526.1"/>
    <property type="molecule type" value="Genomic_RNA"/>
</dbReference>
<dbReference type="EMBL" id="AF033822">
    <property type="protein sequence ID" value="AAC82607.1"/>
    <property type="molecule type" value="Genomic_RNA"/>
</dbReference>
<dbReference type="RefSeq" id="NP_045938.1">
    <property type="nucleotide sequence ID" value="NC_001867.1"/>
</dbReference>
<dbReference type="GeneID" id="1403496"/>
<dbReference type="KEGG" id="vg:1403496"/>
<dbReference type="Proteomes" id="UP000007081">
    <property type="component" value="Segment"/>
</dbReference>
<dbReference type="Proteomes" id="UP000008337">
    <property type="component" value="Genome"/>
</dbReference>
<dbReference type="GO" id="GO:0020002">
    <property type="term" value="C:host cell plasma membrane"/>
    <property type="evidence" value="ECO:0007669"/>
    <property type="project" value="UniProtKB-SubCell"/>
</dbReference>
<dbReference type="GO" id="GO:0016020">
    <property type="term" value="C:membrane"/>
    <property type="evidence" value="ECO:0007669"/>
    <property type="project" value="UniProtKB-KW"/>
</dbReference>
<dbReference type="GO" id="GO:0019013">
    <property type="term" value="C:viral nucleocapsid"/>
    <property type="evidence" value="ECO:0007669"/>
    <property type="project" value="UniProtKB-KW"/>
</dbReference>
<dbReference type="GO" id="GO:0003676">
    <property type="term" value="F:nucleic acid binding"/>
    <property type="evidence" value="ECO:0007669"/>
    <property type="project" value="InterPro"/>
</dbReference>
<dbReference type="GO" id="GO:0008270">
    <property type="term" value="F:zinc ion binding"/>
    <property type="evidence" value="ECO:0007669"/>
    <property type="project" value="UniProtKB-KW"/>
</dbReference>
<dbReference type="Gene3D" id="4.10.60.10">
    <property type="entry name" value="Zinc finger, CCHC-type"/>
    <property type="match status" value="1"/>
</dbReference>
<dbReference type="InterPro" id="IPR001878">
    <property type="entry name" value="Znf_CCHC"/>
</dbReference>
<dbReference type="InterPro" id="IPR036875">
    <property type="entry name" value="Znf_CCHC_sf"/>
</dbReference>
<dbReference type="Pfam" id="PF00098">
    <property type="entry name" value="zf-CCHC"/>
    <property type="match status" value="1"/>
</dbReference>
<dbReference type="SMART" id="SM00343">
    <property type="entry name" value="ZnF_C2HC"/>
    <property type="match status" value="1"/>
</dbReference>
<dbReference type="SUPFAM" id="SSF57756">
    <property type="entry name" value="Retrovirus zinc finger-like domains"/>
    <property type="match status" value="1"/>
</dbReference>
<dbReference type="PROSITE" id="PS50158">
    <property type="entry name" value="ZF_CCHC"/>
    <property type="match status" value="1"/>
</dbReference>
<gene>
    <name type="primary">gag</name>
</gene>
<name>GAG_WDSV</name>
<accession>Q88937</accession>
<organismHost>
    <name type="scientific">Sander vitreus</name>
    <name type="common">Walleye</name>
    <name type="synonym">Perca vitrea</name>
    <dbReference type="NCBI Taxonomy" id="283036"/>
</organismHost>
<comment type="function">
    <molecule>Matrix protein p10</molecule>
    <text evidence="1">Targets Gag and gag-pol polyproteins to the plasma membrane via a multipartite membrane binding signal, that includes its myristoylated N-terminus. Also mediates nuclear localization of the preintegration complex (By similarity).</text>
</comment>
<comment type="function">
    <text evidence="1">Capsid protein p25 forms the spherical core of the virion that encapsulates the genomic RNA-nucleocapsid complex.</text>
</comment>
<comment type="function">
    <molecule>Nucleocapsid protein p14</molecule>
    <text evidence="1">Involved in the packaging and encapsidation of two copies of the genome. Binds with high affinity to conserved UCUG elements within the packaging signal, located near the 5'-end of the genome. This binding is dependent on genome dimerization (By similarity).</text>
</comment>
<comment type="function">
    <molecule>Gag polyprotein</molecule>
    <text evidence="1">Plays a role in budding and is processed by the viral protease during virion maturation outside the cell.</text>
</comment>
<comment type="subcellular location">
    <molecule>Gag polyprotein</molecule>
    <subcellularLocation>
        <location evidence="1">Virion</location>
    </subcellularLocation>
    <subcellularLocation>
        <location evidence="5">Host cell membrane</location>
        <topology evidence="5">Lipid-anchor</topology>
    </subcellularLocation>
</comment>
<comment type="subcellular location">
    <molecule>Matrix protein p10</molecule>
    <subcellularLocation>
        <location evidence="5">Virion</location>
    </subcellularLocation>
</comment>
<comment type="subcellular location">
    <molecule>Capsid protein p25</molecule>
    <subcellularLocation>
        <location evidence="5">Virion</location>
    </subcellularLocation>
</comment>
<comment type="subcellular location">
    <molecule>Nucleocapsid protein p14</molecule>
    <subcellularLocation>
        <location evidence="5">Virion</location>
    </subcellularLocation>
</comment>
<comment type="PTM">
    <text evidence="1">Specific enzymatic cleavages by the viral protease yield mature proteins. The protease is released by autocatalytic cleavage. The polyprotein is cleaved during and after budding, this process is termed maturation (By similarity).</text>
</comment>
<keyword id="KW-0167">Capsid protein</keyword>
<keyword id="KW-0175">Coiled coil</keyword>
<keyword id="KW-0903">Direct protein sequencing</keyword>
<keyword id="KW-1032">Host cell membrane</keyword>
<keyword id="KW-1043">Host membrane</keyword>
<keyword id="KW-0449">Lipoprotein</keyword>
<keyword id="KW-0472">Membrane</keyword>
<keyword id="KW-0479">Metal-binding</keyword>
<keyword id="KW-0519">Myristate</keyword>
<keyword id="KW-1185">Reference proteome</keyword>
<keyword id="KW-0543">Viral nucleoprotein</keyword>
<keyword id="KW-0946">Virion</keyword>
<keyword id="KW-0862">Zinc</keyword>
<keyword id="KW-0863">Zinc-finger</keyword>
<proteinExistence type="evidence at protein level"/>
<protein>
    <recommendedName>
        <fullName>Gag polyprotein</fullName>
    </recommendedName>
    <component>
        <recommendedName>
            <fullName>Matrix protein p10</fullName>
            <shortName>MA</shortName>
        </recommendedName>
    </component>
    <component>
        <recommendedName>
            <fullName>RNA-binding phosphoprotein p20</fullName>
        </recommendedName>
        <alternativeName>
            <fullName>pp12</fullName>
        </alternativeName>
    </component>
    <component>
        <recommendedName>
            <fullName>Capsid protein p25</fullName>
            <shortName>CA</shortName>
        </recommendedName>
    </component>
    <component>
        <recommendedName>
            <fullName>Nucleocapsid protein p14</fullName>
            <shortName>NC-gag</shortName>
        </recommendedName>
    </component>
</protein>
<feature type="initiator methionine" description="Removed" evidence="2">
    <location>
        <position position="1"/>
    </location>
</feature>
<feature type="chain" id="PRO_0000410603" description="Gag polyprotein">
    <location>
        <begin position="2"/>
        <end position="582"/>
    </location>
</feature>
<feature type="chain" id="PRO_0000410604" description="Matrix protein p10">
    <location>
        <begin position="2"/>
        <end position="95"/>
    </location>
</feature>
<feature type="chain" id="PRO_0000410605" description="RNA-binding phosphoprotein p20">
    <location>
        <begin position="96"/>
        <end position="251"/>
    </location>
</feature>
<feature type="chain" id="PRO_0000410606" description="Capsid protein p25">
    <location>
        <begin position="252"/>
        <end position="457"/>
    </location>
</feature>
<feature type="chain" id="PRO_0000410607" description="Nucleocapsid protein p14">
    <location>
        <begin position="458"/>
        <end position="582"/>
    </location>
</feature>
<feature type="zinc finger region" description="CCHC-type" evidence="3">
    <location>
        <begin position="501"/>
        <end position="518"/>
    </location>
</feature>
<feature type="region of interest" description="Disordered" evidence="4">
    <location>
        <begin position="168"/>
        <end position="222"/>
    </location>
</feature>
<feature type="coiled-coil region" evidence="2">
    <location>
        <begin position="154"/>
        <end position="185"/>
    </location>
</feature>
<feature type="compositionally biased region" description="Basic and acidic residues" evidence="4">
    <location>
        <begin position="168"/>
        <end position="178"/>
    </location>
</feature>
<feature type="compositionally biased region" description="Polar residues" evidence="4">
    <location>
        <begin position="201"/>
        <end position="217"/>
    </location>
</feature>
<feature type="site" description="Cleavage; by viral protease" evidence="1">
    <location>
        <begin position="95"/>
        <end position="96"/>
    </location>
</feature>
<feature type="site" description="Cleavage; by viral protease" evidence="1">
    <location>
        <begin position="251"/>
        <end position="252"/>
    </location>
</feature>
<feature type="site" description="Cleavage; by viral protease" evidence="1">
    <location>
        <begin position="457"/>
        <end position="458"/>
    </location>
</feature>
<feature type="lipid moiety-binding region" description="N-myristoyl glycine; by host" evidence="1">
    <location>
        <position position="2"/>
    </location>
</feature>
<sequence length="582" mass="65697">MGNSSSTPPPSALKNSDLFKTMLRTQYSGSVKTRRINQDIKKQYPLWPDQGTCATKHWEQAVLIPLDSVSEETAKVLNFLRVKIQARKGETARQMTAHTIKKLIVGTIDKNKQQTEILQKTDESDEEMDTTNTMLFIARNKRERIAQQQQADLAAQQQVLLLQREQQREQREKDIKKRDEKKKKLLPDTTQKVEQTDIGEASSSDASAQKPISTDNNPDLKVDGVLTRSQHTTVPSNITIKKDGTSVQYQHPIRNYPTGEGNLTAQVRNPFRPLELQQLRKDCPALPEGIPQLAEWLTQTMAIYNCDEADVEQLARVIFPTPVRQIAGVINGHAAANTAAKIQNYVTACRQHYPAVCDWGTIQAFTYKPPQTAHEYVKHAEIIFKNNSGLEWQHATVPFINMVVQGLPPKVTRSLMSGNPDWSTKTIPQIIPLMQHYLNLQSRQDAKIKQTPLVLQLAMPAQTMNGNKGYVGSYPTNEPYYSFQQQQRPAPRAPPGNVPSNTCFFCKQPGHWKADCPNKTRNLRNMGNMGRGGRMGGPPYRSQPYPAFIQPPQNHQNQYNGRMDRSQLQASAQEWLPGTYPA</sequence>
<organism>
    <name type="scientific">Walleye dermal sarcoma virus</name>
    <name type="common">WDSV</name>
    <dbReference type="NCBI Taxonomy" id="39720"/>
    <lineage>
        <taxon>Viruses</taxon>
        <taxon>Riboviria</taxon>
        <taxon>Pararnavirae</taxon>
        <taxon>Artverviricota</taxon>
        <taxon>Revtraviricetes</taxon>
        <taxon>Ortervirales</taxon>
        <taxon>Retroviridae</taxon>
        <taxon>Orthoretrovirinae</taxon>
        <taxon>Epsilonretrovirus</taxon>
    </lineage>
</organism>
<reference key="1">
    <citation type="journal article" date="1995" name="J. Virol.">
        <title>Nucleotide sequence and protein analysis of a complex piscine retrovirus, walleye dermal sarcoma virus.</title>
        <authorList>
            <person name="Holzschu D.L."/>
            <person name="Martineau D."/>
            <person name="Fodor S.K."/>
            <person name="Vogt V.M."/>
            <person name="Bowser P.R."/>
            <person name="Casey J.W."/>
        </authorList>
    </citation>
    <scope>NUCLEOTIDE SEQUENCE [GENOMIC RNA]</scope>
    <scope>PROTEIN SEQUENCE OF 96-105; 252-266 AND 458-467</scope>
    <scope>PROTEOLYTIC PROCESSING OF POLYPROTEIN</scope>
</reference>
<reference key="2">
    <citation type="submission" date="1997-11" db="EMBL/GenBank/DDBJ databases">
        <authorList>
            <person name="Chappey C."/>
        </authorList>
    </citation>
    <scope>NUCLEOTIDE SEQUENCE [GENOMIC RNA]</scope>
</reference>